<keyword id="KW-0328">Glycosyltransferase</keyword>
<keyword id="KW-0660">Purine salvage</keyword>
<keyword id="KW-1185">Reference proteome</keyword>
<keyword id="KW-0808">Transferase</keyword>
<dbReference type="EC" id="2.4.2.28" evidence="1"/>
<dbReference type="EMBL" id="BA000039">
    <property type="protein sequence ID" value="BAC08833.1"/>
    <property type="molecule type" value="Genomic_DNA"/>
</dbReference>
<dbReference type="RefSeq" id="NP_682071.1">
    <property type="nucleotide sequence ID" value="NC_004113.1"/>
</dbReference>
<dbReference type="RefSeq" id="WP_011057121.1">
    <property type="nucleotide sequence ID" value="NC_004113.1"/>
</dbReference>
<dbReference type="SMR" id="Q8DJE4"/>
<dbReference type="STRING" id="197221.gene:10747877"/>
<dbReference type="EnsemblBacteria" id="BAC08833">
    <property type="protein sequence ID" value="BAC08833"/>
    <property type="gene ID" value="BAC08833"/>
</dbReference>
<dbReference type="KEGG" id="tel:tlr1281"/>
<dbReference type="PATRIC" id="fig|197221.4.peg.1348"/>
<dbReference type="eggNOG" id="COG0005">
    <property type="taxonomic scope" value="Bacteria"/>
</dbReference>
<dbReference type="UniPathway" id="UPA00904">
    <property type="reaction ID" value="UER00873"/>
</dbReference>
<dbReference type="Proteomes" id="UP000000440">
    <property type="component" value="Chromosome"/>
</dbReference>
<dbReference type="GO" id="GO:0005829">
    <property type="term" value="C:cytosol"/>
    <property type="evidence" value="ECO:0007669"/>
    <property type="project" value="TreeGrafter"/>
</dbReference>
<dbReference type="GO" id="GO:0017061">
    <property type="term" value="F:S-methyl-5-thioadenosine phosphorylase activity"/>
    <property type="evidence" value="ECO:0007669"/>
    <property type="project" value="UniProtKB-UniRule"/>
</dbReference>
<dbReference type="GO" id="GO:0019509">
    <property type="term" value="P:L-methionine salvage from methylthioadenosine"/>
    <property type="evidence" value="ECO:0007669"/>
    <property type="project" value="UniProtKB-UniRule"/>
</dbReference>
<dbReference type="GO" id="GO:0006166">
    <property type="term" value="P:purine ribonucleoside salvage"/>
    <property type="evidence" value="ECO:0007669"/>
    <property type="project" value="UniProtKB-KW"/>
</dbReference>
<dbReference type="CDD" id="cd09010">
    <property type="entry name" value="MTAP_SsMTAPII_like_MTIP"/>
    <property type="match status" value="1"/>
</dbReference>
<dbReference type="FunFam" id="3.40.50.1580:FF:000008">
    <property type="entry name" value="S-methyl-5'-thioadenosine phosphorylase"/>
    <property type="match status" value="1"/>
</dbReference>
<dbReference type="Gene3D" id="3.40.50.1580">
    <property type="entry name" value="Nucleoside phosphorylase domain"/>
    <property type="match status" value="1"/>
</dbReference>
<dbReference type="HAMAP" id="MF_01963">
    <property type="entry name" value="MTAP"/>
    <property type="match status" value="1"/>
</dbReference>
<dbReference type="InterPro" id="IPR010044">
    <property type="entry name" value="MTAP"/>
</dbReference>
<dbReference type="InterPro" id="IPR000845">
    <property type="entry name" value="Nucleoside_phosphorylase_d"/>
</dbReference>
<dbReference type="InterPro" id="IPR035994">
    <property type="entry name" value="Nucleoside_phosphorylase_sf"/>
</dbReference>
<dbReference type="NCBIfam" id="TIGR01694">
    <property type="entry name" value="MTAP"/>
    <property type="match status" value="1"/>
</dbReference>
<dbReference type="NCBIfam" id="NF005657">
    <property type="entry name" value="PRK07432.1"/>
    <property type="match status" value="1"/>
</dbReference>
<dbReference type="PANTHER" id="PTHR42679">
    <property type="entry name" value="S-METHYL-5'-THIOADENOSINE PHOSPHORYLASE"/>
    <property type="match status" value="1"/>
</dbReference>
<dbReference type="PANTHER" id="PTHR42679:SF2">
    <property type="entry name" value="S-METHYL-5'-THIOADENOSINE PHOSPHORYLASE"/>
    <property type="match status" value="1"/>
</dbReference>
<dbReference type="Pfam" id="PF01048">
    <property type="entry name" value="PNP_UDP_1"/>
    <property type="match status" value="1"/>
</dbReference>
<dbReference type="SUPFAM" id="SSF53167">
    <property type="entry name" value="Purine and uridine phosphorylases"/>
    <property type="match status" value="1"/>
</dbReference>
<evidence type="ECO:0000255" key="1">
    <source>
        <dbReference type="HAMAP-Rule" id="MF_01963"/>
    </source>
</evidence>
<protein>
    <recommendedName>
        <fullName evidence="1">S-methyl-5'-thioadenosine phosphorylase</fullName>
        <ecNumber evidence="1">2.4.2.28</ecNumber>
    </recommendedName>
    <alternativeName>
        <fullName evidence="1">5'-methylthioadenosine phosphorylase</fullName>
        <shortName evidence="1">MTA phosphorylase</shortName>
        <shortName evidence="1">MTAP</shortName>
    </alternativeName>
</protein>
<reference key="1">
    <citation type="journal article" date="2002" name="DNA Res.">
        <title>Complete genome structure of the thermophilic cyanobacterium Thermosynechococcus elongatus BP-1.</title>
        <authorList>
            <person name="Nakamura Y."/>
            <person name="Kaneko T."/>
            <person name="Sato S."/>
            <person name="Ikeuchi M."/>
            <person name="Katoh H."/>
            <person name="Sasamoto S."/>
            <person name="Watanabe A."/>
            <person name="Iriguchi M."/>
            <person name="Kawashima K."/>
            <person name="Kimura T."/>
            <person name="Kishida Y."/>
            <person name="Kiyokawa C."/>
            <person name="Kohara M."/>
            <person name="Matsumoto M."/>
            <person name="Matsuno A."/>
            <person name="Nakazaki N."/>
            <person name="Shimpo S."/>
            <person name="Sugimoto M."/>
            <person name="Takeuchi C."/>
            <person name="Yamada M."/>
            <person name="Tabata S."/>
        </authorList>
    </citation>
    <scope>NUCLEOTIDE SEQUENCE [LARGE SCALE GENOMIC DNA]</scope>
    <source>
        <strain>NIES-2133 / IAM M-273 / BP-1</strain>
    </source>
</reference>
<feature type="chain" id="PRO_0000415101" description="S-methyl-5'-thioadenosine phosphorylase">
    <location>
        <begin position="1"/>
        <end position="289"/>
    </location>
</feature>
<feature type="binding site" evidence="1">
    <location>
        <position position="11"/>
    </location>
    <ligand>
        <name>phosphate</name>
        <dbReference type="ChEBI" id="CHEBI:43474"/>
    </ligand>
</feature>
<feature type="binding site" evidence="1">
    <location>
        <begin position="53"/>
        <end position="54"/>
    </location>
    <ligand>
        <name>phosphate</name>
        <dbReference type="ChEBI" id="CHEBI:43474"/>
    </ligand>
</feature>
<feature type="binding site" evidence="1">
    <location>
        <begin position="86"/>
        <end position="87"/>
    </location>
    <ligand>
        <name>phosphate</name>
        <dbReference type="ChEBI" id="CHEBI:43474"/>
    </ligand>
</feature>
<feature type="binding site" evidence="1">
    <location>
        <position position="187"/>
    </location>
    <ligand>
        <name>substrate</name>
    </ligand>
</feature>
<feature type="binding site" evidence="1">
    <location>
        <position position="188"/>
    </location>
    <ligand>
        <name>phosphate</name>
        <dbReference type="ChEBI" id="CHEBI:43474"/>
    </ligand>
</feature>
<feature type="binding site" evidence="1">
    <location>
        <begin position="211"/>
        <end position="213"/>
    </location>
    <ligand>
        <name>substrate</name>
    </ligand>
</feature>
<feature type="site" description="Important for substrate specificity" evidence="1">
    <location>
        <position position="169"/>
    </location>
</feature>
<feature type="site" description="Important for substrate specificity" evidence="1">
    <location>
        <position position="224"/>
    </location>
</feature>
<sequence length="289" mass="31354">MTAKIGIIGGSGLYKMEALTDVEEVRLTTPFGDPSDAFICGKIGGVPVVFLARHGRHHHLLPTEIPFRANIYGFKSLGVEYLLSASAVGSLQEAVKPLDIVVPDQFIDRTRNRISTFFGDGIVAHIGFADPVCPALAGVLADAIADLNLPDVTLHRQGTYVCMEGPAFSTLAESNLYRSWGGTVIGMTNLPEAKLAREAEIAYATLALVTDYDCWHPEHDSVTVEMIMGNLQRNVKNAQAIICETVKRVHAHPPVSKAHRALKNAILTPLDQVPAATKEKLHLLLAKYL</sequence>
<name>MTAP_THEVB</name>
<organism>
    <name type="scientific">Thermosynechococcus vestitus (strain NIES-2133 / IAM M-273 / BP-1)</name>
    <dbReference type="NCBI Taxonomy" id="197221"/>
    <lineage>
        <taxon>Bacteria</taxon>
        <taxon>Bacillati</taxon>
        <taxon>Cyanobacteriota</taxon>
        <taxon>Cyanophyceae</taxon>
        <taxon>Acaryochloridales</taxon>
        <taxon>Thermosynechococcaceae</taxon>
        <taxon>Thermosynechococcus</taxon>
    </lineage>
</organism>
<accession>Q8DJE4</accession>
<gene>
    <name evidence="1" type="primary">mtnP</name>
    <name type="ordered locus">tlr1281</name>
</gene>
<proteinExistence type="inferred from homology"/>
<comment type="function">
    <text evidence="1">Catalyzes the reversible phosphorylation of S-methyl-5'-thioadenosine (MTA) to adenine and 5-methylthioribose-1-phosphate. Involved in the breakdown of MTA, a major by-product of polyamine biosynthesis. Responsible for the first step in the methionine salvage pathway after MTA has been generated from S-adenosylmethionine. Has broad substrate specificity with 6-aminopurine nucleosides as preferred substrates.</text>
</comment>
<comment type="catalytic activity">
    <reaction evidence="1">
        <text>S-methyl-5'-thioadenosine + phosphate = 5-(methylsulfanyl)-alpha-D-ribose 1-phosphate + adenine</text>
        <dbReference type="Rhea" id="RHEA:11852"/>
        <dbReference type="ChEBI" id="CHEBI:16708"/>
        <dbReference type="ChEBI" id="CHEBI:17509"/>
        <dbReference type="ChEBI" id="CHEBI:43474"/>
        <dbReference type="ChEBI" id="CHEBI:58533"/>
        <dbReference type="EC" id="2.4.2.28"/>
    </reaction>
</comment>
<comment type="pathway">
    <text evidence="1">Amino-acid biosynthesis; L-methionine biosynthesis via salvage pathway; S-methyl-5-thio-alpha-D-ribose 1-phosphate from S-methyl-5'-thioadenosine (phosphorylase route): step 1/1.</text>
</comment>
<comment type="subunit">
    <text evidence="1">Homohexamer. Dimer of a homotrimer.</text>
</comment>
<comment type="similarity">
    <text evidence="1">Belongs to the PNP/MTAP phosphorylase family. MTAP subfamily.</text>
</comment>